<sequence length="159" mass="17788">MAEQTEKAFLKQPKVFLASKKTGKGKRPGKGGNRFWKSIGLGFKTPREAIDGTYIDKKCPFTGTVSIRGRILAGTCHSAKMNRTIIVRRNYLHFIKKYQRYEKRHSNIPAHVSPCFRVKEGDHVIIGQCRPLSKTVRFNVLKVIPAGSSGGVKKAFTAI</sequence>
<proteinExistence type="evidence at transcript level"/>
<evidence type="ECO:0000305" key="1"/>
<reference key="1">
    <citation type="submission" date="2000-01" db="EMBL/GenBank/DDBJ databases">
        <title>Identification of mRNAs expressed in underground adventitious buds of Euphorbia esula (leafy spurge).</title>
        <authorList>
            <person name="Anderson J.V."/>
            <person name="Horvath D.P."/>
        </authorList>
    </citation>
    <scope>NUCLEOTIDE SEQUENCE [MRNA]</scope>
</reference>
<keyword id="KW-0687">Ribonucleoprotein</keyword>
<keyword id="KW-0689">Ribosomal protein</keyword>
<keyword id="KW-0694">RNA-binding</keyword>
<keyword id="KW-0699">rRNA-binding</keyword>
<name>RS11_EUPES</name>
<protein>
    <recommendedName>
        <fullName evidence="1">Small ribosomal subunit protein uS17</fullName>
    </recommendedName>
    <alternativeName>
        <fullName>40S ribosomal protein S11</fullName>
    </alternativeName>
</protein>
<comment type="similarity">
    <text evidence="1">Belongs to the universal ribosomal protein uS17 family.</text>
</comment>
<organism>
    <name type="scientific">Euphorbia esula</name>
    <name type="common">Leafy spurge</name>
    <dbReference type="NCBI Taxonomy" id="3993"/>
    <lineage>
        <taxon>Eukaryota</taxon>
        <taxon>Viridiplantae</taxon>
        <taxon>Streptophyta</taxon>
        <taxon>Embryophyta</taxon>
        <taxon>Tracheophyta</taxon>
        <taxon>Spermatophyta</taxon>
        <taxon>Magnoliopsida</taxon>
        <taxon>eudicotyledons</taxon>
        <taxon>Gunneridae</taxon>
        <taxon>Pentapetalae</taxon>
        <taxon>rosids</taxon>
        <taxon>fabids</taxon>
        <taxon>Malpighiales</taxon>
        <taxon>Euphorbiaceae</taxon>
        <taxon>Euphorbioideae</taxon>
        <taxon>Euphorbieae</taxon>
        <taxon>Euphorbia</taxon>
        <taxon>Euphorbia subgen. Esula</taxon>
        <taxon>Euphorbia sect. Esula</taxon>
    </lineage>
</organism>
<gene>
    <name type="primary">RPS11</name>
</gene>
<feature type="chain" id="PRO_0000128519" description="Small ribosomal subunit protein uS17">
    <location>
        <begin position="1"/>
        <end position="159"/>
    </location>
</feature>
<dbReference type="EMBL" id="AF227626">
    <property type="protein sequence ID" value="AAF34771.1"/>
    <property type="molecule type" value="mRNA"/>
</dbReference>
<dbReference type="SMR" id="Q9M5M1"/>
<dbReference type="GO" id="GO:0022627">
    <property type="term" value="C:cytosolic small ribosomal subunit"/>
    <property type="evidence" value="ECO:0007669"/>
    <property type="project" value="TreeGrafter"/>
</dbReference>
<dbReference type="GO" id="GO:0019843">
    <property type="term" value="F:rRNA binding"/>
    <property type="evidence" value="ECO:0007669"/>
    <property type="project" value="UniProtKB-KW"/>
</dbReference>
<dbReference type="GO" id="GO:0003735">
    <property type="term" value="F:structural constituent of ribosome"/>
    <property type="evidence" value="ECO:0007669"/>
    <property type="project" value="InterPro"/>
</dbReference>
<dbReference type="GO" id="GO:0006412">
    <property type="term" value="P:translation"/>
    <property type="evidence" value="ECO:0007669"/>
    <property type="project" value="InterPro"/>
</dbReference>
<dbReference type="CDD" id="cd00364">
    <property type="entry name" value="Ribosomal_uS17"/>
    <property type="match status" value="1"/>
</dbReference>
<dbReference type="FunFam" id="2.40.50.1000:FF:000003">
    <property type="entry name" value="40S ribosomal protein S11"/>
    <property type="match status" value="1"/>
</dbReference>
<dbReference type="Gene3D" id="2.40.50.1000">
    <property type="match status" value="1"/>
</dbReference>
<dbReference type="InterPro" id="IPR012340">
    <property type="entry name" value="NA-bd_OB-fold"/>
</dbReference>
<dbReference type="InterPro" id="IPR000266">
    <property type="entry name" value="Ribosomal_uS17"/>
</dbReference>
<dbReference type="InterPro" id="IPR028333">
    <property type="entry name" value="Ribosomal_uS17_arc/euk"/>
</dbReference>
<dbReference type="InterPro" id="IPR019979">
    <property type="entry name" value="Ribosomal_uS17_CS"/>
</dbReference>
<dbReference type="InterPro" id="IPR032440">
    <property type="entry name" value="Ribosomal_uS17_N"/>
</dbReference>
<dbReference type="NCBIfam" id="NF006345">
    <property type="entry name" value="PRK08572.1"/>
    <property type="match status" value="1"/>
</dbReference>
<dbReference type="NCBIfam" id="TIGR03630">
    <property type="entry name" value="uS17_arch"/>
    <property type="match status" value="1"/>
</dbReference>
<dbReference type="PANTHER" id="PTHR10744">
    <property type="entry name" value="40S RIBOSOMAL PROTEIN S11 FAMILY MEMBER"/>
    <property type="match status" value="1"/>
</dbReference>
<dbReference type="PANTHER" id="PTHR10744:SF47">
    <property type="entry name" value="SMALL RIBOSOMAL SUBUNIT PROTEIN US17X-RELATED"/>
    <property type="match status" value="1"/>
</dbReference>
<dbReference type="Pfam" id="PF00366">
    <property type="entry name" value="Ribosomal_S17"/>
    <property type="match status" value="1"/>
</dbReference>
<dbReference type="Pfam" id="PF16205">
    <property type="entry name" value="Ribosomal_S17_N"/>
    <property type="match status" value="1"/>
</dbReference>
<dbReference type="PRINTS" id="PR00973">
    <property type="entry name" value="RIBOSOMALS17"/>
</dbReference>
<dbReference type="SUPFAM" id="SSF50249">
    <property type="entry name" value="Nucleic acid-binding proteins"/>
    <property type="match status" value="1"/>
</dbReference>
<dbReference type="PROSITE" id="PS00056">
    <property type="entry name" value="RIBOSOMAL_S17"/>
    <property type="match status" value="1"/>
</dbReference>
<accession>Q9M5M1</accession>